<name>ENTD_SHIFL</name>
<feature type="chain" id="PRO_0000206074" description="Enterobactin synthase component D">
    <location>
        <begin position="1"/>
        <end position="206"/>
    </location>
</feature>
<feature type="binding site" evidence="1">
    <location>
        <position position="107"/>
    </location>
    <ligand>
        <name>Mg(2+)</name>
        <dbReference type="ChEBI" id="CHEBI:18420"/>
    </ligand>
</feature>
<feature type="binding site" evidence="1">
    <location>
        <position position="109"/>
    </location>
    <ligand>
        <name>Mg(2+)</name>
        <dbReference type="ChEBI" id="CHEBI:18420"/>
    </ligand>
</feature>
<feature type="binding site" evidence="1">
    <location>
        <position position="152"/>
    </location>
    <ligand>
        <name>Mg(2+)</name>
        <dbReference type="ChEBI" id="CHEBI:18420"/>
    </ligand>
</feature>
<feature type="sequence conflict" description="In Ref. 1; AAA97936." evidence="4" ref="1">
    <original>EQ</original>
    <variation>DE</variation>
    <location>
        <begin position="27"/>
        <end position="28"/>
    </location>
</feature>
<feature type="sequence conflict" description="In Ref. 1; AAA97936." evidence="4" ref="1">
    <original>TEH</original>
    <variation>AED</variation>
    <location>
        <begin position="48"/>
        <end position="50"/>
    </location>
</feature>
<feature type="sequence conflict" description="In Ref. 1; AAA97936." evidence="4" ref="1">
    <original>V</original>
    <variation>I</variation>
    <location>
        <position position="58"/>
    </location>
</feature>
<feature type="sequence conflict" description="In Ref. 1; AAA97936." evidence="4" ref="1">
    <original>A</original>
    <variation>T</variation>
    <location>
        <position position="93"/>
    </location>
</feature>
<feature type="sequence conflict" description="In Ref. 1; AAA97936." evidence="4" ref="1">
    <original>A</original>
    <variation>G</variation>
    <location>
        <position position="97"/>
    </location>
</feature>
<feature type="sequence conflict" description="In Ref. 1; AAA97936." evidence="4" ref="1">
    <original>Q</original>
    <variation>E</variation>
    <location>
        <position position="115"/>
    </location>
</feature>
<feature type="sequence conflict" description="In Ref. 1; AAA97936." evidence="4" ref="1">
    <original>T</original>
    <variation>I</variation>
    <location>
        <position position="118"/>
    </location>
</feature>
<feature type="sequence conflict" description="In Ref. 1; AAA97936." evidence="4" ref="1">
    <original>D</original>
    <variation>Y</variation>
    <location>
        <position position="163"/>
    </location>
</feature>
<feature type="sequence conflict" description="In Ref. 1; AAA97936." evidence="4" ref="1">
    <original>C</original>
    <variation>S</variation>
    <location>
        <position position="203"/>
    </location>
</feature>
<accession>P0A3C0</accession>
<accession>Q54153</accession>
<accession>Q8XBW8</accession>
<comment type="function">
    <text evidence="2">Involved in the biosynthesis of the siderophore enterobactin (enterochelin), which is a macrocyclic trimeric lactone of N-(2,3-dihydroxybenzoyl)-serine. The serine trilactone serves as a scaffolding for the three catechol functionalities that provide hexadentate coordination for the tightly ligated iron(2+) atoms. Plays an essential role in the assembly of the enterobactin by catalyzing the transfer of the 4'-phosphopantetheine (Ppant) moiety from coenzyme A to the apo-domains of both EntB (ArCP domain) and EntF (PCP domain) to yield their holo-forms which make them competent for the activation of 2,3-dihydroxybenzoate (DHB) and L-serine, respectively.</text>
</comment>
<comment type="catalytic activity">
    <reaction evidence="2">
        <text>apo-[aryl-carrier protein] + CoA = holo-[aryl-carrier protein] + adenosine 3',5'-bisphosphate + H(+)</text>
        <dbReference type="Rhea" id="RHEA:48404"/>
        <dbReference type="Rhea" id="RHEA-COMP:15903"/>
        <dbReference type="Rhea" id="RHEA-COMP:17557"/>
        <dbReference type="ChEBI" id="CHEBI:15378"/>
        <dbReference type="ChEBI" id="CHEBI:29999"/>
        <dbReference type="ChEBI" id="CHEBI:57287"/>
        <dbReference type="ChEBI" id="CHEBI:58343"/>
        <dbReference type="ChEBI" id="CHEBI:64479"/>
    </reaction>
</comment>
<comment type="catalytic activity">
    <reaction evidence="2">
        <text>apo-[peptidyl-carrier protein] + CoA = holo-[peptidyl-carrier protein] + adenosine 3',5'-bisphosphate + H(+)</text>
        <dbReference type="Rhea" id="RHEA:46228"/>
        <dbReference type="Rhea" id="RHEA-COMP:11479"/>
        <dbReference type="Rhea" id="RHEA-COMP:11480"/>
        <dbReference type="ChEBI" id="CHEBI:15378"/>
        <dbReference type="ChEBI" id="CHEBI:29999"/>
        <dbReference type="ChEBI" id="CHEBI:57287"/>
        <dbReference type="ChEBI" id="CHEBI:58343"/>
        <dbReference type="ChEBI" id="CHEBI:64479"/>
    </reaction>
</comment>
<comment type="cofactor">
    <cofactor evidence="3">
        <name>Mg(2+)</name>
        <dbReference type="ChEBI" id="CHEBI:18420"/>
    </cofactor>
</comment>
<comment type="pathway">
    <text evidence="2">Siderophore biosynthesis; enterobactin biosynthesis.</text>
</comment>
<comment type="subunit">
    <text evidence="2">EntB, EntD, EntE, and EntF form a multienzyme complex called enterobactin synthase.</text>
</comment>
<comment type="subcellular location">
    <subcellularLocation>
        <location evidence="2">Membrane</location>
    </subcellularLocation>
</comment>
<comment type="similarity">
    <text evidence="2">Belongs to the P-Pant transferase superfamily. EntD family.</text>
</comment>
<comment type="sequence caution" evidence="4">
    <conflict type="erroneous initiation">
        <sequence resource="EMBL-CDS" id="AAA97936"/>
    </conflict>
    <text>Extended N-terminus.</text>
</comment>
<comment type="sequence caution" evidence="4">
    <conflict type="erroneous initiation">
        <sequence resource="EMBL-CDS" id="AAN42145"/>
    </conflict>
    <text>Extended N-terminus.</text>
</comment>
<comment type="sequence caution" evidence="4">
    <conflict type="erroneous initiation">
        <sequence resource="EMBL-CDS" id="AAP16017"/>
    </conflict>
    <text>Extended N-terminus.</text>
</comment>
<evidence type="ECO:0000250" key="1"/>
<evidence type="ECO:0000250" key="2">
    <source>
        <dbReference type="UniProtKB" id="P19925"/>
    </source>
</evidence>
<evidence type="ECO:0000250" key="3">
    <source>
        <dbReference type="UniProtKB" id="P24224"/>
    </source>
</evidence>
<evidence type="ECO:0000305" key="4"/>
<dbReference type="EC" id="2.7.8.-" evidence="2"/>
<dbReference type="EMBL" id="U52684">
    <property type="protein sequence ID" value="AAA97936.1"/>
    <property type="status" value="ALT_INIT"/>
    <property type="molecule type" value="Genomic_DNA"/>
</dbReference>
<dbReference type="EMBL" id="AE005674">
    <property type="protein sequence ID" value="AAN42145.2"/>
    <property type="status" value="ALT_INIT"/>
    <property type="molecule type" value="Genomic_DNA"/>
</dbReference>
<dbReference type="EMBL" id="AE014073">
    <property type="protein sequence ID" value="AAP16017.1"/>
    <property type="status" value="ALT_INIT"/>
    <property type="molecule type" value="Genomic_DNA"/>
</dbReference>
<dbReference type="RefSeq" id="NP_706438.2">
    <property type="nucleotide sequence ID" value="NC_004337.2"/>
</dbReference>
<dbReference type="RefSeq" id="WP_001506608.1">
    <property type="nucleotide sequence ID" value="NZ_WPGW01000132.1"/>
</dbReference>
<dbReference type="SMR" id="P0A3C0"/>
<dbReference type="STRING" id="198214.SF0495"/>
<dbReference type="PaxDb" id="198214-SF0495"/>
<dbReference type="GeneID" id="1023411"/>
<dbReference type="GeneID" id="75170586"/>
<dbReference type="KEGG" id="sfl:SF0495"/>
<dbReference type="KEGG" id="sfx:S0501"/>
<dbReference type="PATRIC" id="fig|198214.7.peg.573"/>
<dbReference type="HOGENOM" id="CLU_075076_1_0_6"/>
<dbReference type="UniPathway" id="UPA00017"/>
<dbReference type="Proteomes" id="UP000001006">
    <property type="component" value="Chromosome"/>
</dbReference>
<dbReference type="Proteomes" id="UP000002673">
    <property type="component" value="Chromosome"/>
</dbReference>
<dbReference type="GO" id="GO:0009366">
    <property type="term" value="C:enterobactin synthetase complex"/>
    <property type="evidence" value="ECO:0000250"/>
    <property type="project" value="UniProtKB"/>
</dbReference>
<dbReference type="GO" id="GO:0005886">
    <property type="term" value="C:plasma membrane"/>
    <property type="evidence" value="ECO:0000250"/>
    <property type="project" value="UniProtKB"/>
</dbReference>
<dbReference type="GO" id="GO:0008897">
    <property type="term" value="F:holo-[acyl-carrier-protein] synthase activity"/>
    <property type="evidence" value="ECO:0000250"/>
    <property type="project" value="UniProtKB"/>
</dbReference>
<dbReference type="GO" id="GO:0000287">
    <property type="term" value="F:magnesium ion binding"/>
    <property type="evidence" value="ECO:0007669"/>
    <property type="project" value="InterPro"/>
</dbReference>
<dbReference type="GO" id="GO:0009239">
    <property type="term" value="P:enterobactin biosynthetic process"/>
    <property type="evidence" value="ECO:0000250"/>
    <property type="project" value="UniProtKB"/>
</dbReference>
<dbReference type="FunFam" id="3.90.470.20:FF:000012">
    <property type="entry name" value="Enterobactin synthase component D"/>
    <property type="match status" value="1"/>
</dbReference>
<dbReference type="Gene3D" id="3.90.470.20">
    <property type="entry name" value="4'-phosphopantetheinyl transferase domain"/>
    <property type="match status" value="1"/>
</dbReference>
<dbReference type="InterPro" id="IPR008278">
    <property type="entry name" value="4-PPantetheinyl_Trfase_dom"/>
</dbReference>
<dbReference type="InterPro" id="IPR037143">
    <property type="entry name" value="4-PPantetheinyl_Trfase_dom_sf"/>
</dbReference>
<dbReference type="InterPro" id="IPR041354">
    <property type="entry name" value="4PPT_N"/>
</dbReference>
<dbReference type="InterPro" id="IPR003542">
    <property type="entry name" value="Enbac_synth_compD-like"/>
</dbReference>
<dbReference type="NCBIfam" id="NF007604">
    <property type="entry name" value="PRK10251.1"/>
    <property type="match status" value="1"/>
</dbReference>
<dbReference type="PANTHER" id="PTHR38096">
    <property type="entry name" value="ENTEROBACTIN SYNTHASE COMPONENT D"/>
    <property type="match status" value="1"/>
</dbReference>
<dbReference type="PANTHER" id="PTHR38096:SF1">
    <property type="entry name" value="ENTEROBACTIN SYNTHASE COMPONENT D"/>
    <property type="match status" value="1"/>
</dbReference>
<dbReference type="Pfam" id="PF17837">
    <property type="entry name" value="4PPT_N"/>
    <property type="match status" value="1"/>
</dbReference>
<dbReference type="Pfam" id="PF01648">
    <property type="entry name" value="ACPS"/>
    <property type="match status" value="1"/>
</dbReference>
<dbReference type="PRINTS" id="PR01399">
    <property type="entry name" value="ENTSNTHTASED"/>
</dbReference>
<dbReference type="SUPFAM" id="SSF56214">
    <property type="entry name" value="4'-phosphopantetheinyl transferase"/>
    <property type="match status" value="1"/>
</dbReference>
<gene>
    <name evidence="2" type="primary">entD</name>
    <name type="ordered locus">SF0495</name>
    <name type="ordered locus">S0501</name>
</gene>
<sequence length="206" mass="23131">MKTTHTSLPFAGHTLHFVEFDPANFCEQDLLWLPHYAQLQHAGRKRKTEHLAGRIAAVYALREYGYKCVPAIGELRQPVWPAEVYGSISHCGATALAVVSRQPIGVDIEEIFSAQTATELTDNIITPAEHERLADCGLAFSLALTLAFSAKESAFKASEIQTDAGFLDYQIISWNKQQVIIHRENEMFAVHWQIKEKIVITLCQHD</sequence>
<reference key="1">
    <citation type="submission" date="1996-03" db="EMBL/GenBank/DDBJ databases">
        <title>entD enterobactin biosynthesis genes of enteric bacteria.</title>
        <authorList>
            <person name="Johansen K.A."/>
        </authorList>
    </citation>
    <scope>NUCLEOTIDE SEQUENCE [GENOMIC DNA]</scope>
</reference>
<reference key="2">
    <citation type="journal article" date="2002" name="Nucleic Acids Res.">
        <title>Genome sequence of Shigella flexneri 2a: insights into pathogenicity through comparison with genomes of Escherichia coli K12 and O157.</title>
        <authorList>
            <person name="Jin Q."/>
            <person name="Yuan Z."/>
            <person name="Xu J."/>
            <person name="Wang Y."/>
            <person name="Shen Y."/>
            <person name="Lu W."/>
            <person name="Wang J."/>
            <person name="Liu H."/>
            <person name="Yang J."/>
            <person name="Yang F."/>
            <person name="Zhang X."/>
            <person name="Zhang J."/>
            <person name="Yang G."/>
            <person name="Wu H."/>
            <person name="Qu D."/>
            <person name="Dong J."/>
            <person name="Sun L."/>
            <person name="Xue Y."/>
            <person name="Zhao A."/>
            <person name="Gao Y."/>
            <person name="Zhu J."/>
            <person name="Kan B."/>
            <person name="Ding K."/>
            <person name="Chen S."/>
            <person name="Cheng H."/>
            <person name="Yao Z."/>
            <person name="He B."/>
            <person name="Chen R."/>
            <person name="Ma D."/>
            <person name="Qiang B."/>
            <person name="Wen Y."/>
            <person name="Hou Y."/>
            <person name="Yu J."/>
        </authorList>
    </citation>
    <scope>NUCLEOTIDE SEQUENCE [LARGE SCALE GENOMIC DNA]</scope>
    <source>
        <strain>301 / Serotype 2a</strain>
    </source>
</reference>
<reference key="3">
    <citation type="journal article" date="2003" name="Infect. Immun.">
        <title>Complete genome sequence and comparative genomics of Shigella flexneri serotype 2a strain 2457T.</title>
        <authorList>
            <person name="Wei J."/>
            <person name="Goldberg M.B."/>
            <person name="Burland V."/>
            <person name="Venkatesan M.M."/>
            <person name="Deng W."/>
            <person name="Fournier G."/>
            <person name="Mayhew G.F."/>
            <person name="Plunkett G. III"/>
            <person name="Rose D.J."/>
            <person name="Darling A."/>
            <person name="Mau B."/>
            <person name="Perna N.T."/>
            <person name="Payne S.M."/>
            <person name="Runyen-Janecky L.J."/>
            <person name="Zhou S."/>
            <person name="Schwartz D.C."/>
            <person name="Blattner F.R."/>
        </authorList>
    </citation>
    <scope>NUCLEOTIDE SEQUENCE [LARGE SCALE GENOMIC DNA]</scope>
    <source>
        <strain>ATCC 700930 / 2457T / Serotype 2a</strain>
    </source>
</reference>
<keyword id="KW-0259">Enterobactin biosynthesis</keyword>
<keyword id="KW-0460">Magnesium</keyword>
<keyword id="KW-0472">Membrane</keyword>
<keyword id="KW-0479">Metal-binding</keyword>
<keyword id="KW-1185">Reference proteome</keyword>
<keyword id="KW-0808">Transferase</keyword>
<protein>
    <recommendedName>
        <fullName evidence="2">Enterobactin synthase component D</fullName>
    </recommendedName>
    <alternativeName>
        <fullName evidence="2">4'-phosphopantetheinyl transferase EntD</fullName>
        <ecNumber evidence="2">2.7.8.-</ecNumber>
    </alternativeName>
    <alternativeName>
        <fullName evidence="2">Enterochelin synthase D</fullName>
    </alternativeName>
</protein>
<proteinExistence type="inferred from homology"/>
<organism>
    <name type="scientific">Shigella flexneri</name>
    <dbReference type="NCBI Taxonomy" id="623"/>
    <lineage>
        <taxon>Bacteria</taxon>
        <taxon>Pseudomonadati</taxon>
        <taxon>Pseudomonadota</taxon>
        <taxon>Gammaproteobacteria</taxon>
        <taxon>Enterobacterales</taxon>
        <taxon>Enterobacteriaceae</taxon>
        <taxon>Shigella</taxon>
    </lineage>
</organism>